<protein>
    <recommendedName>
        <fullName>Uncharacterized membrane protein SPBC1348.02</fullName>
    </recommendedName>
</protein>
<reference key="1">
    <citation type="journal article" date="2002" name="Nature">
        <title>The genome sequence of Schizosaccharomyces pombe.</title>
        <authorList>
            <person name="Wood V."/>
            <person name="Gwilliam R."/>
            <person name="Rajandream M.A."/>
            <person name="Lyne M.H."/>
            <person name="Lyne R."/>
            <person name="Stewart A."/>
            <person name="Sgouros J.G."/>
            <person name="Peat N."/>
            <person name="Hayles J."/>
            <person name="Baker S.G."/>
            <person name="Basham D."/>
            <person name="Bowman S."/>
            <person name="Brooks K."/>
            <person name="Brown D."/>
            <person name="Brown S."/>
            <person name="Chillingworth T."/>
            <person name="Churcher C.M."/>
            <person name="Collins M."/>
            <person name="Connor R."/>
            <person name="Cronin A."/>
            <person name="Davis P."/>
            <person name="Feltwell T."/>
            <person name="Fraser A."/>
            <person name="Gentles S."/>
            <person name="Goble A."/>
            <person name="Hamlin N."/>
            <person name="Harris D.E."/>
            <person name="Hidalgo J."/>
            <person name="Hodgson G."/>
            <person name="Holroyd S."/>
            <person name="Hornsby T."/>
            <person name="Howarth S."/>
            <person name="Huckle E.J."/>
            <person name="Hunt S."/>
            <person name="Jagels K."/>
            <person name="James K.D."/>
            <person name="Jones L."/>
            <person name="Jones M."/>
            <person name="Leather S."/>
            <person name="McDonald S."/>
            <person name="McLean J."/>
            <person name="Mooney P."/>
            <person name="Moule S."/>
            <person name="Mungall K.L."/>
            <person name="Murphy L.D."/>
            <person name="Niblett D."/>
            <person name="Odell C."/>
            <person name="Oliver K."/>
            <person name="O'Neil S."/>
            <person name="Pearson D."/>
            <person name="Quail M.A."/>
            <person name="Rabbinowitsch E."/>
            <person name="Rutherford K.M."/>
            <person name="Rutter S."/>
            <person name="Saunders D."/>
            <person name="Seeger K."/>
            <person name="Sharp S."/>
            <person name="Skelton J."/>
            <person name="Simmonds M.N."/>
            <person name="Squares R."/>
            <person name="Squares S."/>
            <person name="Stevens K."/>
            <person name="Taylor K."/>
            <person name="Taylor R.G."/>
            <person name="Tivey A."/>
            <person name="Walsh S.V."/>
            <person name="Warren T."/>
            <person name="Whitehead S."/>
            <person name="Woodward J.R."/>
            <person name="Volckaert G."/>
            <person name="Aert R."/>
            <person name="Robben J."/>
            <person name="Grymonprez B."/>
            <person name="Weltjens I."/>
            <person name="Vanstreels E."/>
            <person name="Rieger M."/>
            <person name="Schaefer M."/>
            <person name="Mueller-Auer S."/>
            <person name="Gabel C."/>
            <person name="Fuchs M."/>
            <person name="Duesterhoeft A."/>
            <person name="Fritzc C."/>
            <person name="Holzer E."/>
            <person name="Moestl D."/>
            <person name="Hilbert H."/>
            <person name="Borzym K."/>
            <person name="Langer I."/>
            <person name="Beck A."/>
            <person name="Lehrach H."/>
            <person name="Reinhardt R."/>
            <person name="Pohl T.M."/>
            <person name="Eger P."/>
            <person name="Zimmermann W."/>
            <person name="Wedler H."/>
            <person name="Wambutt R."/>
            <person name="Purnelle B."/>
            <person name="Goffeau A."/>
            <person name="Cadieu E."/>
            <person name="Dreano S."/>
            <person name="Gloux S."/>
            <person name="Lelaure V."/>
            <person name="Mottier S."/>
            <person name="Galibert F."/>
            <person name="Aves S.J."/>
            <person name="Xiang Z."/>
            <person name="Hunt C."/>
            <person name="Moore K."/>
            <person name="Hurst S.M."/>
            <person name="Lucas M."/>
            <person name="Rochet M."/>
            <person name="Gaillardin C."/>
            <person name="Tallada V.A."/>
            <person name="Garzon A."/>
            <person name="Thode G."/>
            <person name="Daga R.R."/>
            <person name="Cruzado L."/>
            <person name="Jimenez J."/>
            <person name="Sanchez M."/>
            <person name="del Rey F."/>
            <person name="Benito J."/>
            <person name="Dominguez A."/>
            <person name="Revuelta J.L."/>
            <person name="Moreno S."/>
            <person name="Armstrong J."/>
            <person name="Forsburg S.L."/>
            <person name="Cerutti L."/>
            <person name="Lowe T."/>
            <person name="McCombie W.R."/>
            <person name="Paulsen I."/>
            <person name="Potashkin J."/>
            <person name="Shpakovski G.V."/>
            <person name="Ussery D."/>
            <person name="Barrell B.G."/>
            <person name="Nurse P."/>
        </authorList>
    </citation>
    <scope>NUCLEOTIDE SEQUENCE [LARGE SCALE GENOMIC DNA]</scope>
    <source>
        <strain>972 / ATCC 24843</strain>
    </source>
</reference>
<reference key="2">
    <citation type="journal article" date="2006" name="Nat. Biotechnol.">
        <title>ORFeome cloning and global analysis of protein localization in the fission yeast Schizosaccharomyces pombe.</title>
        <authorList>
            <person name="Matsuyama A."/>
            <person name="Arai R."/>
            <person name="Yashiroda Y."/>
            <person name="Shirai A."/>
            <person name="Kamata A."/>
            <person name="Sekido S."/>
            <person name="Kobayashi Y."/>
            <person name="Hashimoto A."/>
            <person name="Hamamoto M."/>
            <person name="Hiraoka Y."/>
            <person name="Horinouchi S."/>
            <person name="Yoshida M."/>
        </authorList>
    </citation>
    <scope>SUBCELLULAR LOCATION [LARGE SCALE ANALYSIS]</scope>
</reference>
<name>YI42_SCHPO</name>
<feature type="chain" id="PRO_0000371803" description="Uncharacterized membrane protein SPBC1348.02">
    <location>
        <begin position="1"/>
        <end position="344"/>
    </location>
</feature>
<feature type="topological domain" description="Cytoplasmic" evidence="1">
    <location>
        <begin position="1"/>
        <end position="98"/>
    </location>
</feature>
<feature type="transmembrane region" description="Helical" evidence="1">
    <location>
        <begin position="99"/>
        <end position="119"/>
    </location>
</feature>
<feature type="topological domain" description="Lumenal" evidence="1">
    <location>
        <position position="120"/>
    </location>
</feature>
<feature type="transmembrane region" description="Helical" evidence="1">
    <location>
        <begin position="121"/>
        <end position="141"/>
    </location>
</feature>
<feature type="topological domain" description="Cytoplasmic" evidence="1">
    <location>
        <begin position="142"/>
        <end position="198"/>
    </location>
</feature>
<feature type="transmembrane region" description="Helical" evidence="1">
    <location>
        <begin position="199"/>
        <end position="219"/>
    </location>
</feature>
<feature type="topological domain" description="Lumenal" evidence="1">
    <location>
        <begin position="220"/>
        <end position="222"/>
    </location>
</feature>
<feature type="transmembrane region" description="Helical" evidence="1">
    <location>
        <begin position="223"/>
        <end position="243"/>
    </location>
</feature>
<feature type="topological domain" description="Cytoplasmic" evidence="1">
    <location>
        <begin position="244"/>
        <end position="273"/>
    </location>
</feature>
<feature type="transmembrane region" description="Helical" evidence="1">
    <location>
        <begin position="274"/>
        <end position="294"/>
    </location>
</feature>
<feature type="topological domain" description="Lumenal" evidence="1">
    <location>
        <begin position="295"/>
        <end position="344"/>
    </location>
</feature>
<dbReference type="EMBL" id="CU329671">
    <property type="protein sequence ID" value="CAB94269.1"/>
    <property type="molecule type" value="Genomic_DNA"/>
</dbReference>
<dbReference type="PIR" id="T50274">
    <property type="entry name" value="T50274"/>
</dbReference>
<dbReference type="RefSeq" id="NP_596865.1">
    <property type="nucleotide sequence ID" value="NM_001023888.2"/>
</dbReference>
<dbReference type="STRING" id="284812.P0CU14"/>
<dbReference type="EnsemblFungi" id="SPBC1348.02.1">
    <property type="protein sequence ID" value="SPBC1348.02.1:pep"/>
    <property type="gene ID" value="SPBC1348.02"/>
</dbReference>
<dbReference type="EnsemblFungi" id="SPBPB2B2.19c.1">
    <property type="protein sequence ID" value="SPBPB2B2.19c.1:pep"/>
    <property type="gene ID" value="SPBPB2B2.19c"/>
</dbReference>
<dbReference type="KEGG" id="spo:2541343"/>
<dbReference type="KEGG" id="spo:2541576"/>
<dbReference type="PomBase" id="SPBC1348.02"/>
<dbReference type="VEuPathDB" id="FungiDB:SPBC1348.02"/>
<dbReference type="VEuPathDB" id="FungiDB:SPBPB2B2.19c"/>
<dbReference type="InParanoid" id="P0CU14"/>
<dbReference type="OMA" id="LEIWINN"/>
<dbReference type="PRO" id="PR:P0CU14"/>
<dbReference type="Proteomes" id="UP000002485">
    <property type="component" value="Chromosome II"/>
</dbReference>
<dbReference type="GO" id="GO:0005783">
    <property type="term" value="C:endoplasmic reticulum"/>
    <property type="evidence" value="ECO:0007005"/>
    <property type="project" value="PomBase"/>
</dbReference>
<dbReference type="GO" id="GO:0016020">
    <property type="term" value="C:membrane"/>
    <property type="evidence" value="ECO:0007669"/>
    <property type="project" value="UniProtKB-SubCell"/>
</dbReference>
<dbReference type="InterPro" id="IPR018291">
    <property type="entry name" value="5TM-prot_SCHPO"/>
</dbReference>
<dbReference type="Pfam" id="PF09437">
    <property type="entry name" value="Pombe_5TM"/>
    <property type="match status" value="1"/>
</dbReference>
<keyword id="KW-0256">Endoplasmic reticulum</keyword>
<keyword id="KW-0472">Membrane</keyword>
<keyword id="KW-1185">Reference proteome</keyword>
<keyword id="KW-0812">Transmembrane</keyword>
<keyword id="KW-1133">Transmembrane helix</keyword>
<comment type="subcellular location">
    <subcellularLocation>
        <location evidence="2">Endoplasmic reticulum</location>
    </subcellularLocation>
    <subcellularLocation>
        <location>Membrane</location>
        <topology evidence="3">Multi-pass membrane protein</topology>
    </subcellularLocation>
</comment>
<comment type="similarity">
    <text evidence="3">Belongs to the UPF0742 family.</text>
</comment>
<organism>
    <name type="scientific">Schizosaccharomyces pombe (strain 972 / ATCC 24843)</name>
    <name type="common">Fission yeast</name>
    <dbReference type="NCBI Taxonomy" id="284812"/>
    <lineage>
        <taxon>Eukaryota</taxon>
        <taxon>Fungi</taxon>
        <taxon>Dikarya</taxon>
        <taxon>Ascomycota</taxon>
        <taxon>Taphrinomycotina</taxon>
        <taxon>Schizosaccharomycetes</taxon>
        <taxon>Schizosaccharomycetales</taxon>
        <taxon>Schizosaccharomycetaceae</taxon>
        <taxon>Schizosaccharomyces</taxon>
    </lineage>
</organism>
<proteinExistence type="inferred from homology"/>
<sequence length="344" mass="40151">MIDFVKSRDTVIQKSFFEEFNSQNREMGSFAYSGNSESVWTGENITSIWKTILINETGSYCVAARPMTMDGAEFNLDLMGYSVSEDQINNDEIGIWNYISVAEMGGVLLFLSYWIWTCLHFSKIIFPAQKVICLYIFLFALNQTLQECIEEYVFSSECIKYRQFYSVYEIIDFLRTNFYRLFVIYCALGFGITRTVPKYLMIKGISIVIALCSVYWISLYKDVYVVSEIFDMIQYEVSPAIWVYSICHLLKQCTSVTTYENASKARFFRRMLNAFIFIFCASPMLHYLSNIIFGNFDYRLSVIIGDLFTFMEKIAFPCYIMFPTHNEALAYNRNVAEEAQEKMI</sequence>
<gene>
    <name type="ORF">SPAC1348.02</name>
    <name type="ORF">SPBC1348.02</name>
</gene>
<evidence type="ECO:0000255" key="1"/>
<evidence type="ECO:0000269" key="2">
    <source>
    </source>
</evidence>
<evidence type="ECO:0000305" key="3"/>
<accession>P0CU14</accession>
<accession>Q9P3V8</accession>
<accession>Q9P7U6</accession>